<feature type="initiator methionine" description="Removed" evidence="2">
    <location>
        <position position="1"/>
    </location>
</feature>
<feature type="chain" id="PRO_0000283742" description="Myosin light chain 1/3, skeletal muscle isoform">
    <location>
        <begin position="2"/>
        <end position="192"/>
    </location>
</feature>
<feature type="domain" description="EF-hand 1" evidence="4">
    <location>
        <begin position="48"/>
        <end position="83"/>
    </location>
</feature>
<feature type="domain" description="EF-hand 2" evidence="4">
    <location>
        <begin position="125"/>
        <end position="160"/>
    </location>
</feature>
<feature type="domain" description="EF-hand 3" evidence="4">
    <location>
        <begin position="160"/>
        <end position="192"/>
    </location>
</feature>
<feature type="region of interest" description="Disordered" evidence="5">
    <location>
        <begin position="1"/>
        <end position="34"/>
    </location>
</feature>
<feature type="compositionally biased region" description="Pro residues" evidence="5">
    <location>
        <begin position="17"/>
        <end position="30"/>
    </location>
</feature>
<feature type="modified residue" description="N,N,N-trimethylalanine" evidence="2">
    <location>
        <position position="2"/>
    </location>
</feature>
<feature type="modified residue" description="Phosphothreonine" evidence="1">
    <location>
        <position position="69"/>
    </location>
</feature>
<feature type="modified residue" description="Phosphoserine" evidence="1">
    <location>
        <position position="71"/>
    </location>
</feature>
<feature type="modified residue" description="Phosphothreonine" evidence="1">
    <location>
        <position position="85"/>
    </location>
</feature>
<feature type="modified residue" description="Phosphoserine" evidence="1">
    <location>
        <position position="97"/>
    </location>
</feature>
<feature type="sequence conflict" description="In Ref. 2; AAA86910." evidence="6" ref="2">
    <original>Q</original>
    <variation>E</variation>
    <location>
        <position position="110"/>
    </location>
</feature>
<organism>
    <name type="scientific">Bos taurus</name>
    <name type="common">Bovine</name>
    <dbReference type="NCBI Taxonomy" id="9913"/>
    <lineage>
        <taxon>Eukaryota</taxon>
        <taxon>Metazoa</taxon>
        <taxon>Chordata</taxon>
        <taxon>Craniata</taxon>
        <taxon>Vertebrata</taxon>
        <taxon>Euteleostomi</taxon>
        <taxon>Mammalia</taxon>
        <taxon>Eutheria</taxon>
        <taxon>Laurasiatheria</taxon>
        <taxon>Artiodactyla</taxon>
        <taxon>Ruminantia</taxon>
        <taxon>Pecora</taxon>
        <taxon>Bovidae</taxon>
        <taxon>Bovinae</taxon>
        <taxon>Bos</taxon>
    </lineage>
</organism>
<sequence>MAPKKDVKKPAAAAAPAPAPAPAPAPAPAPPKEEKIDLSAIKIEFSKQQQDEFKEAFLLFDRTGECKITLSQVGDVLRALGTNPTNAEVKKVLGNPSNEEMNAKKIEFEQFLPMLQAISNNKDQGTYEDFVEGLRVFDKEGNGTVMGAELRHVLATLGEKMKEEEVEALMAGQEDSNGCINYEAFVKHIMSN</sequence>
<proteinExistence type="evidence at transcript level"/>
<gene>
    <name evidence="8" type="primary">MYL1</name>
</gene>
<accession>A0JNJ5</accession>
<accession>Q29436</accession>
<dbReference type="EMBL" id="BC126716">
    <property type="protein sequence ID" value="AAI26717.1"/>
    <property type="molecule type" value="mRNA"/>
</dbReference>
<dbReference type="EMBL" id="U45430">
    <property type="protein sequence ID" value="AAA86910.1"/>
    <property type="molecule type" value="mRNA"/>
</dbReference>
<dbReference type="RefSeq" id="NP_001073046.1">
    <property type="nucleotide sequence ID" value="NM_001079578.1"/>
</dbReference>
<dbReference type="RefSeq" id="XP_005202773.1">
    <property type="nucleotide sequence ID" value="XM_005202716.4"/>
</dbReference>
<dbReference type="SMR" id="A0JNJ5"/>
<dbReference type="FunCoup" id="A0JNJ5">
    <property type="interactions" value="52"/>
</dbReference>
<dbReference type="STRING" id="9913.ENSBTAP00000049636"/>
<dbReference type="PaxDb" id="9913-ENSBTAP00000049636"/>
<dbReference type="Ensembl" id="ENSBTAT00000054271.3">
    <property type="protein sequence ID" value="ENSBTAP00000049636.2"/>
    <property type="gene ID" value="ENSBTAG00000009707.7"/>
</dbReference>
<dbReference type="GeneID" id="317657"/>
<dbReference type="KEGG" id="bta:317657"/>
<dbReference type="CTD" id="4632"/>
<dbReference type="VEuPathDB" id="HostDB:ENSBTAG00000009707"/>
<dbReference type="VGNC" id="VGNC:31799">
    <property type="gene designation" value="MYL1"/>
</dbReference>
<dbReference type="eggNOG" id="KOG0030">
    <property type="taxonomic scope" value="Eukaryota"/>
</dbReference>
<dbReference type="GeneTree" id="ENSGT01030000234570"/>
<dbReference type="HOGENOM" id="CLU_061288_13_0_1"/>
<dbReference type="InParanoid" id="A0JNJ5"/>
<dbReference type="OMA" id="NPTNEEM"/>
<dbReference type="OrthoDB" id="5959761at2759"/>
<dbReference type="TreeFam" id="TF351553"/>
<dbReference type="Reactome" id="R-BTA-390522">
    <property type="pathway name" value="Striated Muscle Contraction"/>
</dbReference>
<dbReference type="Proteomes" id="UP000009136">
    <property type="component" value="Chromosome 2"/>
</dbReference>
<dbReference type="Bgee" id="ENSBTAG00000009707">
    <property type="expression patterns" value="Expressed in biceps femoris and 76 other cell types or tissues"/>
</dbReference>
<dbReference type="GO" id="GO:0043292">
    <property type="term" value="C:contractile muscle fiber"/>
    <property type="evidence" value="ECO:0000318"/>
    <property type="project" value="GO_Central"/>
</dbReference>
<dbReference type="GO" id="GO:0030016">
    <property type="term" value="C:myofibril"/>
    <property type="evidence" value="ECO:0007669"/>
    <property type="project" value="Ensembl"/>
</dbReference>
<dbReference type="GO" id="GO:0016460">
    <property type="term" value="C:myosin II complex"/>
    <property type="evidence" value="ECO:0000318"/>
    <property type="project" value="GO_Central"/>
</dbReference>
<dbReference type="GO" id="GO:0005509">
    <property type="term" value="F:calcium ion binding"/>
    <property type="evidence" value="ECO:0007669"/>
    <property type="project" value="InterPro"/>
</dbReference>
<dbReference type="GO" id="GO:0008307">
    <property type="term" value="F:structural constituent of muscle"/>
    <property type="evidence" value="ECO:0000250"/>
    <property type="project" value="UniProtKB"/>
</dbReference>
<dbReference type="GO" id="GO:0006936">
    <property type="term" value="P:muscle contraction"/>
    <property type="evidence" value="ECO:0007669"/>
    <property type="project" value="Ensembl"/>
</dbReference>
<dbReference type="CDD" id="cd00051">
    <property type="entry name" value="EFh"/>
    <property type="match status" value="1"/>
</dbReference>
<dbReference type="FunFam" id="1.10.238.10:FF:000019">
    <property type="entry name" value="Myosin light chain 1 skeletal"/>
    <property type="match status" value="1"/>
</dbReference>
<dbReference type="FunFam" id="1.10.238.10:FF:000056">
    <property type="entry name" value="Myosin light chain 1 skeletal"/>
    <property type="match status" value="1"/>
</dbReference>
<dbReference type="Gene3D" id="1.10.238.10">
    <property type="entry name" value="EF-hand"/>
    <property type="match status" value="2"/>
</dbReference>
<dbReference type="InterPro" id="IPR050230">
    <property type="entry name" value="CALM/Myosin/TropC-like"/>
</dbReference>
<dbReference type="InterPro" id="IPR011992">
    <property type="entry name" value="EF-hand-dom_pair"/>
</dbReference>
<dbReference type="InterPro" id="IPR002048">
    <property type="entry name" value="EF_hand_dom"/>
</dbReference>
<dbReference type="PANTHER" id="PTHR23048">
    <property type="entry name" value="MYOSIN LIGHT CHAIN 1, 3"/>
    <property type="match status" value="1"/>
</dbReference>
<dbReference type="PANTHER" id="PTHR23048:SF3">
    <property type="entry name" value="MYOSIN LIGHT CHAIN 1_3, SKELETAL MUSCLE ISOFORM"/>
    <property type="match status" value="1"/>
</dbReference>
<dbReference type="SMART" id="SM00054">
    <property type="entry name" value="EFh"/>
    <property type="match status" value="2"/>
</dbReference>
<dbReference type="SUPFAM" id="SSF47473">
    <property type="entry name" value="EF-hand"/>
    <property type="match status" value="1"/>
</dbReference>
<dbReference type="PROSITE" id="PS50222">
    <property type="entry name" value="EF_HAND_2"/>
    <property type="match status" value="3"/>
</dbReference>
<comment type="function">
    <text evidence="3">Non-regulatory myosin light chain required for proper formation and/or maintenance of myofibers, and thus appropriate muscle function.</text>
</comment>
<comment type="subunit">
    <text evidence="3">Myosin is a hexamer of 2 heavy chains and 4 light chains. Does not bind calcium.</text>
</comment>
<protein>
    <recommendedName>
        <fullName>Myosin light chain 1/3, skeletal muscle isoform</fullName>
        <shortName>MLC1/MLC3</shortName>
        <shortName>MLC1F/MLC3F</shortName>
    </recommendedName>
    <alternativeName>
        <fullName>Myosin light chain alkali 1/2</fullName>
        <shortName>Myosin light chain A1/A2</shortName>
    </alternativeName>
</protein>
<reference evidence="8" key="1">
    <citation type="submission" date="2006-10" db="EMBL/GenBank/DDBJ databases">
        <authorList>
            <consortium name="NIH - Mammalian Gene Collection (MGC) project"/>
        </authorList>
    </citation>
    <scope>NUCLEOTIDE SEQUENCE [LARGE SCALE MRNA]</scope>
    <source>
        <strain evidence="8">Hereford</strain>
        <tissue evidence="8">Fetal muscle</tissue>
    </source>
</reference>
<reference evidence="6 7" key="2">
    <citation type="journal article" date="1995" name="Am. J. Physiol.">
        <title>Bovine fast-twitch myosin light chain 1: cloning and mRNA amount in muscle of cattle treated with clenbuterol.</title>
        <authorList>
            <person name="Smith S.B."/>
            <person name="Davis S.K."/>
            <person name="Wilson J.J."/>
            <person name="Stone R.T."/>
            <person name="Wu F.Y."/>
            <person name="Garcia D.K."/>
            <person name="Lunt D.K."/>
            <person name="Schiavetta A.M."/>
        </authorList>
    </citation>
    <scope>NUCLEOTIDE SEQUENCE [MRNA] OF 25-192</scope>
    <source>
        <tissue evidence="7">Longissimus dorsi muscle</tissue>
    </source>
</reference>
<keyword id="KW-0488">Methylation</keyword>
<keyword id="KW-0505">Motor protein</keyword>
<keyword id="KW-0514">Muscle protein</keyword>
<keyword id="KW-0518">Myosin</keyword>
<keyword id="KW-0597">Phosphoprotein</keyword>
<keyword id="KW-1185">Reference proteome</keyword>
<keyword id="KW-0677">Repeat</keyword>
<name>MYL1_BOVIN</name>
<evidence type="ECO:0000250" key="1">
    <source>
        <dbReference type="UniProtKB" id="P02600"/>
    </source>
</evidence>
<evidence type="ECO:0000250" key="2">
    <source>
        <dbReference type="UniProtKB" id="P02602"/>
    </source>
</evidence>
<evidence type="ECO:0000250" key="3">
    <source>
        <dbReference type="UniProtKB" id="P05976"/>
    </source>
</evidence>
<evidence type="ECO:0000255" key="4">
    <source>
        <dbReference type="PROSITE-ProRule" id="PRU00448"/>
    </source>
</evidence>
<evidence type="ECO:0000256" key="5">
    <source>
        <dbReference type="SAM" id="MobiDB-lite"/>
    </source>
</evidence>
<evidence type="ECO:0000305" key="6"/>
<evidence type="ECO:0000312" key="7">
    <source>
        <dbReference type="EMBL" id="AAA86910.1"/>
    </source>
</evidence>
<evidence type="ECO:0000312" key="8">
    <source>
        <dbReference type="EMBL" id="AAI26717.1"/>
    </source>
</evidence>